<protein>
    <recommendedName>
        <fullName>Keratin-associated protein 5-10</fullName>
    </recommendedName>
    <alternativeName>
        <fullName>Keratin-associated protein 5.10</fullName>
    </alternativeName>
    <alternativeName>
        <fullName>Ultrahigh sulfur keratin-associated protein 5.10</fullName>
    </alternativeName>
</protein>
<feature type="chain" id="PRO_0000184108" description="Keratin-associated protein 5-10">
    <location>
        <begin position="1"/>
        <end position="202"/>
    </location>
</feature>
<feature type="repeat" description="1">
    <location>
        <begin position="48"/>
        <end position="51"/>
    </location>
</feature>
<feature type="repeat" description="2">
    <location>
        <begin position="54"/>
        <end position="57"/>
    </location>
</feature>
<feature type="repeat" description="3">
    <location>
        <begin position="144"/>
        <end position="147"/>
    </location>
</feature>
<feature type="repeat" description="4">
    <location>
        <begin position="162"/>
        <end position="165"/>
    </location>
</feature>
<feature type="repeat" description="5">
    <location>
        <begin position="172"/>
        <end position="175"/>
    </location>
</feature>
<feature type="repeat" description="6">
    <location>
        <begin position="182"/>
        <end position="185"/>
    </location>
</feature>
<feature type="repeat" description="7">
    <location>
        <begin position="192"/>
        <end position="195"/>
    </location>
</feature>
<feature type="region of interest" description="7 X 4 AA repeats of C-C-X-P">
    <location>
        <begin position="48"/>
        <end position="195"/>
    </location>
</feature>
<sequence length="202" mass="17984">MGCCGCSGGCGSGCGGCGSGCGGCGSGCGGYGSGCGGCGSSCCVPVCCCKPVCCCVPACSCSSCGSCGGSKGDCGSCGGSKGGCGSCGGSKGGCGSCGGSKGGCGSCGGSKGGCGSCGGSKGGCGSCGGSKGGCGSCGCSQCNCCKPCCCSSGCGSCCQSSCCNPCCCQSSCCVPVCCQSSCCKPCCCQSSCCVPVCCQCKI</sequence>
<keyword id="KW-0416">Keratin</keyword>
<keyword id="KW-1185">Reference proteome</keyword>
<keyword id="KW-0677">Repeat</keyword>
<reference key="1">
    <citation type="journal article" date="2004" name="Biochem. Biophys. Res. Commun.">
        <title>Identification of two novel clusters of ultrahigh-sulfur keratin-associated protein genes on human chromosome 11.</title>
        <authorList>
            <person name="Yahagi S."/>
            <person name="Shibuya K."/>
            <person name="Obayashi I."/>
            <person name="Masaki H."/>
            <person name="Kurata Y."/>
            <person name="Kudoh J."/>
            <person name="Shimizu N."/>
        </authorList>
    </citation>
    <scope>NUCLEOTIDE SEQUENCE [MRNA]</scope>
    <scope>TISSUE SPECIFICITY</scope>
    <source>
        <tissue>Hair root</tissue>
    </source>
</reference>
<reference key="2">
    <citation type="journal article" date="2004" name="Genome Res.">
        <title>The status, quality, and expansion of the NIH full-length cDNA project: the Mammalian Gene Collection (MGC).</title>
        <authorList>
            <consortium name="The MGC Project Team"/>
        </authorList>
    </citation>
    <scope>NUCLEOTIDE SEQUENCE [LARGE SCALE MRNA]</scope>
</reference>
<dbReference type="EMBL" id="AB126079">
    <property type="protein sequence ID" value="BAD20206.1"/>
    <property type="molecule type" value="mRNA"/>
</dbReference>
<dbReference type="EMBL" id="BC137550">
    <property type="protein sequence ID" value="AAI37551.1"/>
    <property type="molecule type" value="mRNA"/>
</dbReference>
<dbReference type="EMBL" id="BC137566">
    <property type="protein sequence ID" value="AAI37567.1"/>
    <property type="molecule type" value="mRNA"/>
</dbReference>
<dbReference type="CCDS" id="CCDS41684.1"/>
<dbReference type="RefSeq" id="NP_001012728.1">
    <property type="nucleotide sequence ID" value="NM_001012710.2"/>
</dbReference>
<dbReference type="BioGRID" id="132269">
    <property type="interactions" value="1"/>
</dbReference>
<dbReference type="FunCoup" id="Q6L8G5">
    <property type="interactions" value="78"/>
</dbReference>
<dbReference type="STRING" id="9606.ENSP00000381542"/>
<dbReference type="iPTMnet" id="Q6L8G5"/>
<dbReference type="PhosphoSitePlus" id="Q6L8G5"/>
<dbReference type="BioMuta" id="KRTAP5-10"/>
<dbReference type="PaxDb" id="9606-ENSP00000381542"/>
<dbReference type="PeptideAtlas" id="Q6L8G5"/>
<dbReference type="Ensembl" id="ENST00000398531.3">
    <property type="protein sequence ID" value="ENSP00000381542.1"/>
    <property type="gene ID" value="ENSG00000204572.10"/>
</dbReference>
<dbReference type="GeneID" id="387273"/>
<dbReference type="KEGG" id="hsa:387273"/>
<dbReference type="MANE-Select" id="ENST00000398531.3">
    <property type="protein sequence ID" value="ENSP00000381542.1"/>
    <property type="RefSeq nucleotide sequence ID" value="NM_001012710.2"/>
    <property type="RefSeq protein sequence ID" value="NP_001012728.1"/>
</dbReference>
<dbReference type="UCSC" id="uc001oqt.2">
    <property type="organism name" value="human"/>
</dbReference>
<dbReference type="AGR" id="HGNC:23605"/>
<dbReference type="CTD" id="387273"/>
<dbReference type="GeneCards" id="KRTAP5-10"/>
<dbReference type="HGNC" id="HGNC:23605">
    <property type="gene designation" value="KRTAP5-10"/>
</dbReference>
<dbReference type="HPA" id="ENSG00000204572">
    <property type="expression patterns" value="Group enriched (epididymis, skin)"/>
</dbReference>
<dbReference type="neXtProt" id="NX_Q6L8G5"/>
<dbReference type="OpenTargets" id="ENSG00000204572"/>
<dbReference type="PharmGKB" id="PA134898624"/>
<dbReference type="VEuPathDB" id="HostDB:ENSG00000204572"/>
<dbReference type="eggNOG" id="KOG4726">
    <property type="taxonomic scope" value="Eukaryota"/>
</dbReference>
<dbReference type="GeneTree" id="ENSGT01060000250173"/>
<dbReference type="HOGENOM" id="CLU_097966_0_0_1"/>
<dbReference type="InParanoid" id="Q6L8G5"/>
<dbReference type="OMA" id="CECITEG"/>
<dbReference type="PAN-GO" id="Q6L8G5">
    <property type="GO annotations" value="0 GO annotations based on evolutionary models"/>
</dbReference>
<dbReference type="PathwayCommons" id="Q6L8G5"/>
<dbReference type="Reactome" id="R-HSA-6805567">
    <property type="pathway name" value="Keratinization"/>
</dbReference>
<dbReference type="BioGRID-ORCS" id="387273">
    <property type="hits" value="318 hits in 1062 CRISPR screens"/>
</dbReference>
<dbReference type="GenomeRNAi" id="387273"/>
<dbReference type="Pharos" id="Q6L8G5">
    <property type="development level" value="Tdark"/>
</dbReference>
<dbReference type="PRO" id="PR:Q6L8G5"/>
<dbReference type="Proteomes" id="UP000005640">
    <property type="component" value="Chromosome 11"/>
</dbReference>
<dbReference type="RNAct" id="Q6L8G5">
    <property type="molecule type" value="protein"/>
</dbReference>
<dbReference type="Bgee" id="ENSG00000204572">
    <property type="expression patterns" value="Expressed in male germ line stem cell (sensu Vertebrata) in testis and 75 other cell types or tissues"/>
</dbReference>
<dbReference type="GO" id="GO:0005829">
    <property type="term" value="C:cytosol"/>
    <property type="evidence" value="ECO:0000304"/>
    <property type="project" value="Reactome"/>
</dbReference>
<dbReference type="GO" id="GO:0005882">
    <property type="term" value="C:intermediate filament"/>
    <property type="evidence" value="ECO:0007669"/>
    <property type="project" value="UniProtKB-KW"/>
</dbReference>
<gene>
    <name type="primary">KRTAP5-10</name>
    <name type="synonym">KAP5.10</name>
    <name type="synonym">KRTAP5.10</name>
</gene>
<comment type="function">
    <text>In the hair cortex, hair keratin intermediate filaments are embedded in an interfilamentous matrix, consisting of hair keratin-associated protein (KRTAP), which are essential for the formation of a rigid and resistant hair shaft through their extensive disulfide bond cross-linking with abundant cysteine residues of hair keratins. The matrix proteins include the high-sulfur and high-glycine-tyrosine keratins.</text>
</comment>
<comment type="subunit">
    <text>Interacts with hair keratins.</text>
</comment>
<comment type="tissue specificity">
    <text evidence="1">Expressed in hair root but not in skin. Expressed also in brain and skeletal muscle.</text>
</comment>
<comment type="similarity">
    <text evidence="2">Belongs to the KRTAP type 5 family.</text>
</comment>
<name>KR510_HUMAN</name>
<organism>
    <name type="scientific">Homo sapiens</name>
    <name type="common">Human</name>
    <dbReference type="NCBI Taxonomy" id="9606"/>
    <lineage>
        <taxon>Eukaryota</taxon>
        <taxon>Metazoa</taxon>
        <taxon>Chordata</taxon>
        <taxon>Craniata</taxon>
        <taxon>Vertebrata</taxon>
        <taxon>Euteleostomi</taxon>
        <taxon>Mammalia</taxon>
        <taxon>Eutheria</taxon>
        <taxon>Euarchontoglires</taxon>
        <taxon>Primates</taxon>
        <taxon>Haplorrhini</taxon>
        <taxon>Catarrhini</taxon>
        <taxon>Hominidae</taxon>
        <taxon>Homo</taxon>
    </lineage>
</organism>
<proteinExistence type="evidence at transcript level"/>
<evidence type="ECO:0000269" key="1">
    <source>
    </source>
</evidence>
<evidence type="ECO:0000305" key="2"/>
<accession>Q6L8G5</accession>
<accession>B9EHA4</accession>